<dbReference type="EC" id="4.2.1.11" evidence="1"/>
<dbReference type="EMBL" id="AF061753">
    <property type="protein sequence ID" value="AAC33442.1"/>
    <property type="molecule type" value="Genomic_DNA"/>
</dbReference>
<dbReference type="EMBL" id="AL954747">
    <property type="protein sequence ID" value="CAD84955.1"/>
    <property type="molecule type" value="Genomic_DNA"/>
</dbReference>
<dbReference type="RefSeq" id="WP_011111649.1">
    <property type="nucleotide sequence ID" value="NC_004757.1"/>
</dbReference>
<dbReference type="SMR" id="O85348"/>
<dbReference type="STRING" id="228410.NE1044"/>
<dbReference type="GeneID" id="87104232"/>
<dbReference type="KEGG" id="neu:NE1044"/>
<dbReference type="eggNOG" id="COG0148">
    <property type="taxonomic scope" value="Bacteria"/>
</dbReference>
<dbReference type="HOGENOM" id="CLU_031223_2_1_4"/>
<dbReference type="OrthoDB" id="9804716at2"/>
<dbReference type="PhylomeDB" id="O85348"/>
<dbReference type="UniPathway" id="UPA00109">
    <property type="reaction ID" value="UER00187"/>
</dbReference>
<dbReference type="Proteomes" id="UP000001416">
    <property type="component" value="Chromosome"/>
</dbReference>
<dbReference type="GO" id="GO:0009986">
    <property type="term" value="C:cell surface"/>
    <property type="evidence" value="ECO:0007669"/>
    <property type="project" value="UniProtKB-SubCell"/>
</dbReference>
<dbReference type="GO" id="GO:0005576">
    <property type="term" value="C:extracellular region"/>
    <property type="evidence" value="ECO:0007669"/>
    <property type="project" value="UniProtKB-SubCell"/>
</dbReference>
<dbReference type="GO" id="GO:0000015">
    <property type="term" value="C:phosphopyruvate hydratase complex"/>
    <property type="evidence" value="ECO:0007669"/>
    <property type="project" value="InterPro"/>
</dbReference>
<dbReference type="GO" id="GO:0000287">
    <property type="term" value="F:magnesium ion binding"/>
    <property type="evidence" value="ECO:0007669"/>
    <property type="project" value="UniProtKB-UniRule"/>
</dbReference>
<dbReference type="GO" id="GO:0004634">
    <property type="term" value="F:phosphopyruvate hydratase activity"/>
    <property type="evidence" value="ECO:0007669"/>
    <property type="project" value="UniProtKB-UniRule"/>
</dbReference>
<dbReference type="GO" id="GO:0006096">
    <property type="term" value="P:glycolytic process"/>
    <property type="evidence" value="ECO:0007669"/>
    <property type="project" value="UniProtKB-UniRule"/>
</dbReference>
<dbReference type="CDD" id="cd03313">
    <property type="entry name" value="enolase"/>
    <property type="match status" value="1"/>
</dbReference>
<dbReference type="FunFam" id="3.20.20.120:FF:000001">
    <property type="entry name" value="Enolase"/>
    <property type="match status" value="1"/>
</dbReference>
<dbReference type="FunFam" id="3.30.390.10:FF:000001">
    <property type="entry name" value="Enolase"/>
    <property type="match status" value="1"/>
</dbReference>
<dbReference type="Gene3D" id="3.20.20.120">
    <property type="entry name" value="Enolase-like C-terminal domain"/>
    <property type="match status" value="1"/>
</dbReference>
<dbReference type="Gene3D" id="3.30.390.10">
    <property type="entry name" value="Enolase-like, N-terminal domain"/>
    <property type="match status" value="1"/>
</dbReference>
<dbReference type="HAMAP" id="MF_00318">
    <property type="entry name" value="Enolase"/>
    <property type="match status" value="1"/>
</dbReference>
<dbReference type="InterPro" id="IPR000941">
    <property type="entry name" value="Enolase"/>
</dbReference>
<dbReference type="InterPro" id="IPR036849">
    <property type="entry name" value="Enolase-like_C_sf"/>
</dbReference>
<dbReference type="InterPro" id="IPR029017">
    <property type="entry name" value="Enolase-like_N"/>
</dbReference>
<dbReference type="InterPro" id="IPR020810">
    <property type="entry name" value="Enolase_C"/>
</dbReference>
<dbReference type="InterPro" id="IPR020809">
    <property type="entry name" value="Enolase_CS"/>
</dbReference>
<dbReference type="InterPro" id="IPR020811">
    <property type="entry name" value="Enolase_N"/>
</dbReference>
<dbReference type="NCBIfam" id="TIGR01060">
    <property type="entry name" value="eno"/>
    <property type="match status" value="1"/>
</dbReference>
<dbReference type="PANTHER" id="PTHR11902">
    <property type="entry name" value="ENOLASE"/>
    <property type="match status" value="1"/>
</dbReference>
<dbReference type="PANTHER" id="PTHR11902:SF1">
    <property type="entry name" value="ENOLASE"/>
    <property type="match status" value="1"/>
</dbReference>
<dbReference type="Pfam" id="PF00113">
    <property type="entry name" value="Enolase_C"/>
    <property type="match status" value="1"/>
</dbReference>
<dbReference type="Pfam" id="PF03952">
    <property type="entry name" value="Enolase_N"/>
    <property type="match status" value="1"/>
</dbReference>
<dbReference type="PIRSF" id="PIRSF001400">
    <property type="entry name" value="Enolase"/>
    <property type="match status" value="1"/>
</dbReference>
<dbReference type="PRINTS" id="PR00148">
    <property type="entry name" value="ENOLASE"/>
</dbReference>
<dbReference type="SFLD" id="SFLDS00001">
    <property type="entry name" value="Enolase"/>
    <property type="match status" value="1"/>
</dbReference>
<dbReference type="SFLD" id="SFLDF00002">
    <property type="entry name" value="enolase"/>
    <property type="match status" value="1"/>
</dbReference>
<dbReference type="SMART" id="SM01192">
    <property type="entry name" value="Enolase_C"/>
    <property type="match status" value="1"/>
</dbReference>
<dbReference type="SMART" id="SM01193">
    <property type="entry name" value="Enolase_N"/>
    <property type="match status" value="1"/>
</dbReference>
<dbReference type="SUPFAM" id="SSF51604">
    <property type="entry name" value="Enolase C-terminal domain-like"/>
    <property type="match status" value="1"/>
</dbReference>
<dbReference type="SUPFAM" id="SSF54826">
    <property type="entry name" value="Enolase N-terminal domain-like"/>
    <property type="match status" value="1"/>
</dbReference>
<dbReference type="PROSITE" id="PS00164">
    <property type="entry name" value="ENOLASE"/>
    <property type="match status" value="1"/>
</dbReference>
<keyword id="KW-0963">Cytoplasm</keyword>
<keyword id="KW-0324">Glycolysis</keyword>
<keyword id="KW-0456">Lyase</keyword>
<keyword id="KW-0460">Magnesium</keyword>
<keyword id="KW-0479">Metal-binding</keyword>
<keyword id="KW-1185">Reference proteome</keyword>
<keyword id="KW-0964">Secreted</keyword>
<evidence type="ECO:0000255" key="1">
    <source>
        <dbReference type="HAMAP-Rule" id="MF_00318"/>
    </source>
</evidence>
<protein>
    <recommendedName>
        <fullName evidence="1">Enolase</fullName>
        <ecNumber evidence="1">4.2.1.11</ecNumber>
    </recommendedName>
    <alternativeName>
        <fullName evidence="1">2-phospho-D-glycerate hydro-lyase</fullName>
    </alternativeName>
    <alternativeName>
        <fullName evidence="1">2-phosphoglycerate dehydratase</fullName>
    </alternativeName>
</protein>
<feature type="chain" id="PRO_0000133936" description="Enolase">
    <location>
        <begin position="1"/>
        <end position="428"/>
    </location>
</feature>
<feature type="active site" description="Proton donor" evidence="1">
    <location>
        <position position="205"/>
    </location>
</feature>
<feature type="active site" description="Proton acceptor" evidence="1">
    <location>
        <position position="337"/>
    </location>
</feature>
<feature type="binding site" evidence="1">
    <location>
        <position position="163"/>
    </location>
    <ligand>
        <name>(2R)-2-phosphoglycerate</name>
        <dbReference type="ChEBI" id="CHEBI:58289"/>
    </ligand>
</feature>
<feature type="binding site" evidence="1">
    <location>
        <position position="242"/>
    </location>
    <ligand>
        <name>Mg(2+)</name>
        <dbReference type="ChEBI" id="CHEBI:18420"/>
    </ligand>
</feature>
<feature type="binding site" evidence="1">
    <location>
        <position position="285"/>
    </location>
    <ligand>
        <name>Mg(2+)</name>
        <dbReference type="ChEBI" id="CHEBI:18420"/>
    </ligand>
</feature>
<feature type="binding site" evidence="1">
    <location>
        <position position="312"/>
    </location>
    <ligand>
        <name>Mg(2+)</name>
        <dbReference type="ChEBI" id="CHEBI:18420"/>
    </ligand>
</feature>
<feature type="binding site" evidence="1">
    <location>
        <position position="337"/>
    </location>
    <ligand>
        <name>(2R)-2-phosphoglycerate</name>
        <dbReference type="ChEBI" id="CHEBI:58289"/>
    </ligand>
</feature>
<feature type="binding site" evidence="1">
    <location>
        <position position="366"/>
    </location>
    <ligand>
        <name>(2R)-2-phosphoglycerate</name>
        <dbReference type="ChEBI" id="CHEBI:58289"/>
    </ligand>
</feature>
<feature type="binding site" evidence="1">
    <location>
        <position position="367"/>
    </location>
    <ligand>
        <name>(2R)-2-phosphoglycerate</name>
        <dbReference type="ChEBI" id="CHEBI:58289"/>
    </ligand>
</feature>
<feature type="binding site" evidence="1">
    <location>
        <position position="388"/>
    </location>
    <ligand>
        <name>(2R)-2-phosphoglycerate</name>
        <dbReference type="ChEBI" id="CHEBI:58289"/>
    </ligand>
</feature>
<reference key="1">
    <citation type="journal article" date="1998" name="FEMS Microbiol. Lett.">
        <title>Linkage of genes encoding enolase (eno) and CTP synthase (pyrG) in the beta-subdivision proteobacterium Nitrosomonas europaea.</title>
        <authorList>
            <person name="Mahony T.J."/>
            <person name="Miller D.J."/>
        </authorList>
    </citation>
    <scope>NUCLEOTIDE SEQUENCE [GENOMIC DNA]</scope>
    <source>
        <strain>ATCC 19718 / CIP 103999 / KCTC 2705 / NBRC 14298</strain>
    </source>
</reference>
<reference key="2">
    <citation type="journal article" date="2003" name="J. Bacteriol.">
        <title>Complete genome sequence of the ammonia-oxidizing bacterium and obligate chemolithoautotroph Nitrosomonas europaea.</title>
        <authorList>
            <person name="Chain P."/>
            <person name="Lamerdin J.E."/>
            <person name="Larimer F.W."/>
            <person name="Regala W."/>
            <person name="Lao V."/>
            <person name="Land M.L."/>
            <person name="Hauser L."/>
            <person name="Hooper A.B."/>
            <person name="Klotz M.G."/>
            <person name="Norton J."/>
            <person name="Sayavedra-Soto L.A."/>
            <person name="Arciero D.M."/>
            <person name="Hommes N.G."/>
            <person name="Whittaker M.M."/>
            <person name="Arp D.J."/>
        </authorList>
    </citation>
    <scope>NUCLEOTIDE SEQUENCE [LARGE SCALE GENOMIC DNA]</scope>
    <source>
        <strain>ATCC 19718 / CIP 103999 / KCTC 2705 / NBRC 14298</strain>
    </source>
</reference>
<name>ENO_NITEU</name>
<accession>O85348</accession>
<organism>
    <name type="scientific">Nitrosomonas europaea (strain ATCC 19718 / CIP 103999 / KCTC 2705 / NBRC 14298)</name>
    <dbReference type="NCBI Taxonomy" id="228410"/>
    <lineage>
        <taxon>Bacteria</taxon>
        <taxon>Pseudomonadati</taxon>
        <taxon>Pseudomonadota</taxon>
        <taxon>Betaproteobacteria</taxon>
        <taxon>Nitrosomonadales</taxon>
        <taxon>Nitrosomonadaceae</taxon>
        <taxon>Nitrosomonas</taxon>
    </lineage>
</organism>
<proteinExistence type="inferred from homology"/>
<comment type="function">
    <text evidence="1">Catalyzes the reversible conversion of 2-phosphoglycerate (2-PG) into phosphoenolpyruvate (PEP). It is essential for the degradation of carbohydrates via glycolysis.</text>
</comment>
<comment type="catalytic activity">
    <reaction evidence="1">
        <text>(2R)-2-phosphoglycerate = phosphoenolpyruvate + H2O</text>
        <dbReference type="Rhea" id="RHEA:10164"/>
        <dbReference type="ChEBI" id="CHEBI:15377"/>
        <dbReference type="ChEBI" id="CHEBI:58289"/>
        <dbReference type="ChEBI" id="CHEBI:58702"/>
        <dbReference type="EC" id="4.2.1.11"/>
    </reaction>
</comment>
<comment type="cofactor">
    <cofactor evidence="1">
        <name>Mg(2+)</name>
        <dbReference type="ChEBI" id="CHEBI:18420"/>
    </cofactor>
    <text evidence="1">Binds a second Mg(2+) ion via substrate during catalysis.</text>
</comment>
<comment type="pathway">
    <text evidence="1">Carbohydrate degradation; glycolysis; pyruvate from D-glyceraldehyde 3-phosphate: step 4/5.</text>
</comment>
<comment type="subcellular location">
    <subcellularLocation>
        <location evidence="1">Cytoplasm</location>
    </subcellularLocation>
    <subcellularLocation>
        <location evidence="1">Secreted</location>
    </subcellularLocation>
    <subcellularLocation>
        <location evidence="1">Cell surface</location>
    </subcellularLocation>
    <text evidence="1">Fractions of enolase are present in both the cytoplasm and on the cell surface.</text>
</comment>
<comment type="similarity">
    <text evidence="1">Belongs to the enolase family.</text>
</comment>
<sequence length="428" mass="46241">MSAIVDVIAREIIDSRGNPTIEADVLLESGVLGRASVPSGASVGTREAVELRDGDAQRYYGKGVLKAVESVNGEISETIMGLDAMEQCFIDKTLIELDGSENKSRLGANAILAVSLAVAKAAAEESGLPLYRYLGGINAKWLPVPMMNLVNGGVHANNRLDMQEFMIIPLGLPNLREAVRCGAEVFSTLRTLLNKRNLPTTVGDEGGFAPSFARNEEALALIVQAIDEAGYQPGSEVAIGVDCASSEFFREGKYHLDVDGLGLTSAQFVDYLATWVEKYPIISIEDGMSEQDWEGWGLLTERLGKTVQLVGDDVFVTNTRILKEGISRNIANSILIKINQIGTLTETLNAIEMAKCAGYTAIVSHRSGETEDTTIADIAVATNALQIKTGSLSRSDRLAKYNQLLRIEEDLGEMAQYAGRSAFYQLKP</sequence>
<gene>
    <name evidence="1" type="primary">eno</name>
    <name type="ordered locus">NE1044</name>
</gene>